<feature type="chain" id="PRO_0000175263" description="DNA-directed RNA polymerase subunit alpha">
    <location>
        <begin position="1"/>
        <end position="314"/>
    </location>
</feature>
<feature type="region of interest" description="Alpha N-terminal domain (alpha-NTD)" evidence="1">
    <location>
        <begin position="1"/>
        <end position="228"/>
    </location>
</feature>
<feature type="region of interest" description="Alpha C-terminal domain (alpha-CTD)" evidence="1">
    <location>
        <begin position="245"/>
        <end position="314"/>
    </location>
</feature>
<sequence>MIEIEKPKIETVELNEDAKYGKFVIEPLERGYGTTLGNSLRRILLSSLPGAAVTAIQIDGVLHEFSTVEGVVEDVTTIILNLKKLALKIYSEEEKTLEIDVQGEGIVTAADITHDSDVEILNPDLHIATLAKDAHFRVRLTAKRGRGYTPADANKSEDQPIGVIPIDSIYTPVSRVTYQVEKTRVGQVANYDKLTLDVWTDGSIGPKEAISLGAKILTEHLNIFVGLTDEAQNAEIMVEKEEDQKEKVLEMTIEELDLSVRSYNCLKRAGINTVQELANKTEEDMMKVRNLGRKSLEEVKHKLEELGLGLRKDD</sequence>
<dbReference type="EC" id="2.7.7.6" evidence="1"/>
<dbReference type="EMBL" id="AE017355">
    <property type="protein sequence ID" value="AAT63939.1"/>
    <property type="molecule type" value="Genomic_DNA"/>
</dbReference>
<dbReference type="RefSeq" id="WP_000569643.1">
    <property type="nucleotide sequence ID" value="NC_005957.1"/>
</dbReference>
<dbReference type="RefSeq" id="YP_034488.1">
    <property type="nucleotide sequence ID" value="NC_005957.1"/>
</dbReference>
<dbReference type="SMR" id="Q6HPN2"/>
<dbReference type="KEGG" id="btk:BT9727_0132"/>
<dbReference type="PATRIC" id="fig|281309.8.peg.134"/>
<dbReference type="HOGENOM" id="CLU_053084_0_1_9"/>
<dbReference type="PRO" id="PR:Q6HPN2"/>
<dbReference type="Proteomes" id="UP000001301">
    <property type="component" value="Chromosome"/>
</dbReference>
<dbReference type="GO" id="GO:0005737">
    <property type="term" value="C:cytoplasm"/>
    <property type="evidence" value="ECO:0007669"/>
    <property type="project" value="UniProtKB-ARBA"/>
</dbReference>
<dbReference type="GO" id="GO:0000428">
    <property type="term" value="C:DNA-directed RNA polymerase complex"/>
    <property type="evidence" value="ECO:0007669"/>
    <property type="project" value="UniProtKB-KW"/>
</dbReference>
<dbReference type="GO" id="GO:0003677">
    <property type="term" value="F:DNA binding"/>
    <property type="evidence" value="ECO:0007669"/>
    <property type="project" value="UniProtKB-UniRule"/>
</dbReference>
<dbReference type="GO" id="GO:0003899">
    <property type="term" value="F:DNA-directed RNA polymerase activity"/>
    <property type="evidence" value="ECO:0007669"/>
    <property type="project" value="UniProtKB-UniRule"/>
</dbReference>
<dbReference type="GO" id="GO:0046983">
    <property type="term" value="F:protein dimerization activity"/>
    <property type="evidence" value="ECO:0007669"/>
    <property type="project" value="InterPro"/>
</dbReference>
<dbReference type="GO" id="GO:0006351">
    <property type="term" value="P:DNA-templated transcription"/>
    <property type="evidence" value="ECO:0007669"/>
    <property type="project" value="UniProtKB-UniRule"/>
</dbReference>
<dbReference type="CDD" id="cd06928">
    <property type="entry name" value="RNAP_alpha_NTD"/>
    <property type="match status" value="1"/>
</dbReference>
<dbReference type="FunFam" id="1.10.150.20:FF:000001">
    <property type="entry name" value="DNA-directed RNA polymerase subunit alpha"/>
    <property type="match status" value="1"/>
</dbReference>
<dbReference type="FunFam" id="2.170.120.12:FF:000001">
    <property type="entry name" value="DNA-directed RNA polymerase subunit alpha"/>
    <property type="match status" value="1"/>
</dbReference>
<dbReference type="Gene3D" id="1.10.150.20">
    <property type="entry name" value="5' to 3' exonuclease, C-terminal subdomain"/>
    <property type="match status" value="1"/>
</dbReference>
<dbReference type="Gene3D" id="2.170.120.12">
    <property type="entry name" value="DNA-directed RNA polymerase, insert domain"/>
    <property type="match status" value="1"/>
</dbReference>
<dbReference type="Gene3D" id="3.30.1360.10">
    <property type="entry name" value="RNA polymerase, RBP11-like subunit"/>
    <property type="match status" value="1"/>
</dbReference>
<dbReference type="HAMAP" id="MF_00059">
    <property type="entry name" value="RNApol_bact_RpoA"/>
    <property type="match status" value="1"/>
</dbReference>
<dbReference type="InterPro" id="IPR011262">
    <property type="entry name" value="DNA-dir_RNA_pol_insert"/>
</dbReference>
<dbReference type="InterPro" id="IPR011263">
    <property type="entry name" value="DNA-dir_RNA_pol_RpoA/D/Rpb3"/>
</dbReference>
<dbReference type="InterPro" id="IPR011773">
    <property type="entry name" value="DNA-dir_RpoA"/>
</dbReference>
<dbReference type="InterPro" id="IPR036603">
    <property type="entry name" value="RBP11-like"/>
</dbReference>
<dbReference type="InterPro" id="IPR011260">
    <property type="entry name" value="RNAP_asu_C"/>
</dbReference>
<dbReference type="InterPro" id="IPR036643">
    <property type="entry name" value="RNApol_insert_sf"/>
</dbReference>
<dbReference type="NCBIfam" id="NF003513">
    <property type="entry name" value="PRK05182.1-2"/>
    <property type="match status" value="1"/>
</dbReference>
<dbReference type="NCBIfam" id="NF003515">
    <property type="entry name" value="PRK05182.2-1"/>
    <property type="match status" value="1"/>
</dbReference>
<dbReference type="NCBIfam" id="NF003516">
    <property type="entry name" value="PRK05182.2-2"/>
    <property type="match status" value="1"/>
</dbReference>
<dbReference type="NCBIfam" id="NF003519">
    <property type="entry name" value="PRK05182.2-5"/>
    <property type="match status" value="1"/>
</dbReference>
<dbReference type="NCBIfam" id="TIGR02027">
    <property type="entry name" value="rpoA"/>
    <property type="match status" value="1"/>
</dbReference>
<dbReference type="Pfam" id="PF01000">
    <property type="entry name" value="RNA_pol_A_bac"/>
    <property type="match status" value="1"/>
</dbReference>
<dbReference type="Pfam" id="PF03118">
    <property type="entry name" value="RNA_pol_A_CTD"/>
    <property type="match status" value="1"/>
</dbReference>
<dbReference type="Pfam" id="PF01193">
    <property type="entry name" value="RNA_pol_L"/>
    <property type="match status" value="1"/>
</dbReference>
<dbReference type="SMART" id="SM00662">
    <property type="entry name" value="RPOLD"/>
    <property type="match status" value="1"/>
</dbReference>
<dbReference type="SUPFAM" id="SSF47789">
    <property type="entry name" value="C-terminal domain of RNA polymerase alpha subunit"/>
    <property type="match status" value="1"/>
</dbReference>
<dbReference type="SUPFAM" id="SSF56553">
    <property type="entry name" value="Insert subdomain of RNA polymerase alpha subunit"/>
    <property type="match status" value="1"/>
</dbReference>
<dbReference type="SUPFAM" id="SSF55257">
    <property type="entry name" value="RBP11-like subunits of RNA polymerase"/>
    <property type="match status" value="1"/>
</dbReference>
<name>RPOA_BACHK</name>
<protein>
    <recommendedName>
        <fullName evidence="1">DNA-directed RNA polymerase subunit alpha</fullName>
        <shortName evidence="1">RNAP subunit alpha</shortName>
        <ecNumber evidence="1">2.7.7.6</ecNumber>
    </recommendedName>
    <alternativeName>
        <fullName evidence="1">RNA polymerase subunit alpha</fullName>
    </alternativeName>
    <alternativeName>
        <fullName evidence="1">Transcriptase subunit alpha</fullName>
    </alternativeName>
</protein>
<accession>Q6HPN2</accession>
<reference key="1">
    <citation type="journal article" date="2006" name="J. Bacteriol.">
        <title>Pathogenomic sequence analysis of Bacillus cereus and Bacillus thuringiensis isolates closely related to Bacillus anthracis.</title>
        <authorList>
            <person name="Han C.S."/>
            <person name="Xie G."/>
            <person name="Challacombe J.F."/>
            <person name="Altherr M.R."/>
            <person name="Bhotika S.S."/>
            <person name="Bruce D."/>
            <person name="Campbell C.S."/>
            <person name="Campbell M.L."/>
            <person name="Chen J."/>
            <person name="Chertkov O."/>
            <person name="Cleland C."/>
            <person name="Dimitrijevic M."/>
            <person name="Doggett N.A."/>
            <person name="Fawcett J.J."/>
            <person name="Glavina T."/>
            <person name="Goodwin L.A."/>
            <person name="Hill K.K."/>
            <person name="Hitchcock P."/>
            <person name="Jackson P.J."/>
            <person name="Keim P."/>
            <person name="Kewalramani A.R."/>
            <person name="Longmire J."/>
            <person name="Lucas S."/>
            <person name="Malfatti S."/>
            <person name="McMurry K."/>
            <person name="Meincke L.J."/>
            <person name="Misra M."/>
            <person name="Moseman B.L."/>
            <person name="Mundt M."/>
            <person name="Munk A.C."/>
            <person name="Okinaka R.T."/>
            <person name="Parson-Quintana B."/>
            <person name="Reilly L.P."/>
            <person name="Richardson P."/>
            <person name="Robinson D.L."/>
            <person name="Rubin E."/>
            <person name="Saunders E."/>
            <person name="Tapia R."/>
            <person name="Tesmer J.G."/>
            <person name="Thayer N."/>
            <person name="Thompson L.S."/>
            <person name="Tice H."/>
            <person name="Ticknor L.O."/>
            <person name="Wills P.L."/>
            <person name="Brettin T.S."/>
            <person name="Gilna P."/>
        </authorList>
    </citation>
    <scope>NUCLEOTIDE SEQUENCE [LARGE SCALE GENOMIC DNA]</scope>
    <source>
        <strain>97-27</strain>
    </source>
</reference>
<organism>
    <name type="scientific">Bacillus thuringiensis subsp. konkukian (strain 97-27)</name>
    <dbReference type="NCBI Taxonomy" id="281309"/>
    <lineage>
        <taxon>Bacteria</taxon>
        <taxon>Bacillati</taxon>
        <taxon>Bacillota</taxon>
        <taxon>Bacilli</taxon>
        <taxon>Bacillales</taxon>
        <taxon>Bacillaceae</taxon>
        <taxon>Bacillus</taxon>
        <taxon>Bacillus cereus group</taxon>
    </lineage>
</organism>
<evidence type="ECO:0000255" key="1">
    <source>
        <dbReference type="HAMAP-Rule" id="MF_00059"/>
    </source>
</evidence>
<gene>
    <name evidence="1" type="primary">rpoA</name>
    <name type="ordered locus">BT9727_0132</name>
</gene>
<proteinExistence type="inferred from homology"/>
<keyword id="KW-0240">DNA-directed RNA polymerase</keyword>
<keyword id="KW-0548">Nucleotidyltransferase</keyword>
<keyword id="KW-0804">Transcription</keyword>
<keyword id="KW-0808">Transferase</keyword>
<comment type="function">
    <text evidence="1">DNA-dependent RNA polymerase catalyzes the transcription of DNA into RNA using the four ribonucleoside triphosphates as substrates.</text>
</comment>
<comment type="catalytic activity">
    <reaction evidence="1">
        <text>RNA(n) + a ribonucleoside 5'-triphosphate = RNA(n+1) + diphosphate</text>
        <dbReference type="Rhea" id="RHEA:21248"/>
        <dbReference type="Rhea" id="RHEA-COMP:14527"/>
        <dbReference type="Rhea" id="RHEA-COMP:17342"/>
        <dbReference type="ChEBI" id="CHEBI:33019"/>
        <dbReference type="ChEBI" id="CHEBI:61557"/>
        <dbReference type="ChEBI" id="CHEBI:140395"/>
        <dbReference type="EC" id="2.7.7.6"/>
    </reaction>
</comment>
<comment type="subunit">
    <text evidence="1">Homodimer. The RNAP catalytic core consists of 2 alpha, 1 beta, 1 beta' and 1 omega subunit. When a sigma factor is associated with the core the holoenzyme is formed, which can initiate transcription.</text>
</comment>
<comment type="domain">
    <text evidence="1">The N-terminal domain is essential for RNAP assembly and basal transcription, whereas the C-terminal domain is involved in interaction with transcriptional regulators and with upstream promoter elements.</text>
</comment>
<comment type="similarity">
    <text evidence="1">Belongs to the RNA polymerase alpha chain family.</text>
</comment>